<proteinExistence type="evidence at protein level"/>
<protein>
    <recommendedName>
        <fullName>V-type sodium ATPase subunit D</fullName>
    </recommendedName>
    <alternativeName>
        <fullName>Na(+)-translocating ATPase subunit D</fullName>
    </alternativeName>
    <alternativeName>
        <fullName>V-type sodium pump subunit D</fullName>
    </alternativeName>
</protein>
<accession>P43435</accession>
<accession>I6T729</accession>
<gene>
    <name type="primary">ntpD</name>
    <name type="ordered locus">EHR_08270</name>
</gene>
<reference key="1">
    <citation type="journal article" date="1994" name="J. Biol. Chem.">
        <title>Sequencing and characterization of the ntp gene cluster for vacuolar-type Na(+)-translocating ATPase of Enterococcus hirae.</title>
        <authorList>
            <person name="Takase K."/>
            <person name="Kakinuma S."/>
            <person name="Yamato I."/>
            <person name="Konishi K."/>
            <person name="Igarashi K."/>
            <person name="Kakinuma Y."/>
        </authorList>
    </citation>
    <scope>NUCLEOTIDE SEQUENCE [GENOMIC DNA]</scope>
    <scope>PROTEIN SEQUENCE OF 1-14</scope>
    <scope>FUNCTION</scope>
    <source>
        <strain>ATCC 9790 / DSM 20160 / JCM 8729 / LMG 6399 / NBRC 3181 / NCIMB 6459 / NCDO 1258 / NCTC 12367 / WDCM 00089 / R</strain>
    </source>
</reference>
<reference key="2">
    <citation type="journal article" date="2012" name="J. Bacteriol.">
        <title>Genome sequence of Enterococcus hirae (Streptococcus faecalis) ATCC 9790, a model organism for the study of ion transport, bioenergetics, and copper homeostasis.</title>
        <authorList>
            <person name="Gaechter T."/>
            <person name="Wunderlin C."/>
            <person name="Schmidheini T."/>
            <person name="Solioz M."/>
        </authorList>
    </citation>
    <scope>NUCLEOTIDE SEQUENCE [LARGE SCALE GENOMIC DNA]</scope>
    <source>
        <strain>ATCC 9790 / DSM 20160 / JCM 8729 / LMG 6399 / NBRC 3181 / NCIMB 6459 / NCDO 1258 / NCTC 12367 / WDCM 00089 / R</strain>
    </source>
</reference>
<organism>
    <name type="scientific">Enterococcus hirae (strain ATCC 9790 / DSM 20160 / JCM 8729 / LMG 6399 / NBRC 3181 / NCIMB 6459 / NCDO 1258 / NCTC 12367 / WDCM 00089 / R)</name>
    <dbReference type="NCBI Taxonomy" id="768486"/>
    <lineage>
        <taxon>Bacteria</taxon>
        <taxon>Bacillati</taxon>
        <taxon>Bacillota</taxon>
        <taxon>Bacilli</taxon>
        <taxon>Lactobacillales</taxon>
        <taxon>Enterococcaceae</taxon>
        <taxon>Enterococcus</taxon>
    </lineage>
</organism>
<comment type="function">
    <text evidence="1">Involved in ATP-driven sodium extrusion.</text>
</comment>
<comment type="similarity">
    <text evidence="2">Belongs to the V-ATPase D subunit family.</text>
</comment>
<sequence length="210" mass="24566">MRLNVNPTRMELTRLKKQLTTATRGHKLLKDKQDELMRQFILLIRKNNELRQAIEKETQTAMKDFVLAKSTVEEAFIDELLALPAENVSISVVEKNIMSVKVPLMNFQYDETLNETPLEYGYLHSNAELDRSIDGFTQLLPKLLKLAEVEKTCQLMAEEIEKTRRRVNALEYMTIPQLEETIYYIKMKLEENERAEVTRLIKVKNMGTEE</sequence>
<evidence type="ECO:0000269" key="1">
    <source>
    </source>
</evidence>
<evidence type="ECO:0000305" key="2"/>
<evidence type="ECO:0007829" key="3">
    <source>
        <dbReference type="PDB" id="3AON"/>
    </source>
</evidence>
<dbReference type="EMBL" id="D17462">
    <property type="protein sequence ID" value="BAA04277.1"/>
    <property type="molecule type" value="Genomic_DNA"/>
</dbReference>
<dbReference type="EMBL" id="CP003504">
    <property type="protein sequence ID" value="AFM70581.1"/>
    <property type="molecule type" value="Genomic_DNA"/>
</dbReference>
<dbReference type="PIR" id="F53610">
    <property type="entry name" value="F53610"/>
</dbReference>
<dbReference type="RefSeq" id="WP_010738012.1">
    <property type="nucleotide sequence ID" value="NC_018081.1"/>
</dbReference>
<dbReference type="PDB" id="3AON">
    <property type="method" value="X-ray"/>
    <property type="resolution" value="2.00 A"/>
    <property type="chains" value="A=1-210"/>
</dbReference>
<dbReference type="PDB" id="3VR4">
    <property type="method" value="X-ray"/>
    <property type="resolution" value="2.17 A"/>
    <property type="chains" value="G=1-210"/>
</dbReference>
<dbReference type="PDB" id="3VR5">
    <property type="method" value="X-ray"/>
    <property type="resolution" value="3.90 A"/>
    <property type="chains" value="G=1-210"/>
</dbReference>
<dbReference type="PDB" id="3VR6">
    <property type="method" value="X-ray"/>
    <property type="resolution" value="2.68 A"/>
    <property type="chains" value="G=1-210"/>
</dbReference>
<dbReference type="PDB" id="5KNB">
    <property type="method" value="X-ray"/>
    <property type="resolution" value="3.25 A"/>
    <property type="chains" value="G=1-210"/>
</dbReference>
<dbReference type="PDB" id="5KNC">
    <property type="method" value="X-ray"/>
    <property type="resolution" value="3.02 A"/>
    <property type="chains" value="G=1-210"/>
</dbReference>
<dbReference type="PDB" id="5KND">
    <property type="method" value="X-ray"/>
    <property type="resolution" value="2.89 A"/>
    <property type="chains" value="G=1-210"/>
</dbReference>
<dbReference type="PDBsum" id="3AON"/>
<dbReference type="PDBsum" id="3VR4"/>
<dbReference type="PDBsum" id="3VR5"/>
<dbReference type="PDBsum" id="3VR6"/>
<dbReference type="PDBsum" id="5KNB"/>
<dbReference type="PDBsum" id="5KNC"/>
<dbReference type="PDBsum" id="5KND"/>
<dbReference type="SMR" id="P43435"/>
<dbReference type="DIP" id="DIP-59796N"/>
<dbReference type="IntAct" id="P43435">
    <property type="interactions" value="2"/>
</dbReference>
<dbReference type="TCDB" id="3.A.2.2.2">
    <property type="family name" value="the h+- or na+-translocating f-type, v-type and a-type atpase (f-atpase) superfamily"/>
</dbReference>
<dbReference type="KEGG" id="ehr:EHR_08270"/>
<dbReference type="eggNOG" id="COG1394">
    <property type="taxonomic scope" value="Bacteria"/>
</dbReference>
<dbReference type="HOGENOM" id="CLU_069688_2_1_9"/>
<dbReference type="OrthoDB" id="9781718at2"/>
<dbReference type="BioCyc" id="MetaCyc:MONOMER-14149"/>
<dbReference type="EvolutionaryTrace" id="P43435"/>
<dbReference type="Proteomes" id="UP000002895">
    <property type="component" value="Chromosome"/>
</dbReference>
<dbReference type="GO" id="GO:0005524">
    <property type="term" value="F:ATP binding"/>
    <property type="evidence" value="ECO:0007669"/>
    <property type="project" value="UniProtKB-UniRule"/>
</dbReference>
<dbReference type="GO" id="GO:0046933">
    <property type="term" value="F:proton-transporting ATP synthase activity, rotational mechanism"/>
    <property type="evidence" value="ECO:0007669"/>
    <property type="project" value="UniProtKB-UniRule"/>
</dbReference>
<dbReference type="GO" id="GO:0046961">
    <property type="term" value="F:proton-transporting ATPase activity, rotational mechanism"/>
    <property type="evidence" value="ECO:0007669"/>
    <property type="project" value="InterPro"/>
</dbReference>
<dbReference type="GO" id="GO:0042777">
    <property type="term" value="P:proton motive force-driven plasma membrane ATP synthesis"/>
    <property type="evidence" value="ECO:0007669"/>
    <property type="project" value="UniProtKB-UniRule"/>
</dbReference>
<dbReference type="GO" id="GO:0006814">
    <property type="term" value="P:sodium ion transport"/>
    <property type="evidence" value="ECO:0007669"/>
    <property type="project" value="UniProtKB-KW"/>
</dbReference>
<dbReference type="FunFam" id="1.10.287.3240:FF:000007">
    <property type="entry name" value="V-type ATP synthase subunit D"/>
    <property type="match status" value="1"/>
</dbReference>
<dbReference type="Gene3D" id="1.10.287.3240">
    <property type="match status" value="1"/>
</dbReference>
<dbReference type="HAMAP" id="MF_00271">
    <property type="entry name" value="ATP_synth_D_arch"/>
    <property type="match status" value="1"/>
</dbReference>
<dbReference type="InterPro" id="IPR002699">
    <property type="entry name" value="V_ATPase_D"/>
</dbReference>
<dbReference type="NCBIfam" id="NF001543">
    <property type="entry name" value="PRK00373.1-2"/>
    <property type="match status" value="1"/>
</dbReference>
<dbReference type="NCBIfam" id="TIGR00309">
    <property type="entry name" value="V_ATPase_subD"/>
    <property type="match status" value="1"/>
</dbReference>
<dbReference type="PANTHER" id="PTHR11671">
    <property type="entry name" value="V-TYPE ATP SYNTHASE SUBUNIT D"/>
    <property type="match status" value="1"/>
</dbReference>
<dbReference type="Pfam" id="PF01813">
    <property type="entry name" value="ATP-synt_D"/>
    <property type="match status" value="1"/>
</dbReference>
<name>NTPD_ENTHA</name>
<feature type="chain" id="PRO_0000144275" description="V-type sodium ATPase subunit D">
    <location>
        <begin position="1"/>
        <end position="210"/>
    </location>
</feature>
<feature type="sequence conflict" description="In Ref. 1; BAA04277." evidence="2" ref="1">
    <original>IKVKNMGTEE</original>
    <variation>SQSEKYGNRRVRLIQFSILMAFFMIRTNRI</variation>
    <location>
        <begin position="201"/>
        <end position="210"/>
    </location>
</feature>
<feature type="helix" evidence="3">
    <location>
        <begin position="9"/>
        <end position="69"/>
    </location>
</feature>
<feature type="helix" evidence="3">
    <location>
        <begin position="74"/>
        <end position="81"/>
    </location>
</feature>
<feature type="strand" evidence="3">
    <location>
        <begin position="89"/>
        <end position="97"/>
    </location>
</feature>
<feature type="strand" evidence="3">
    <location>
        <begin position="100"/>
        <end position="108"/>
    </location>
</feature>
<feature type="helix" evidence="3">
    <location>
        <begin position="111"/>
        <end position="113"/>
    </location>
</feature>
<feature type="helix" evidence="3">
    <location>
        <begin position="127"/>
        <end position="172"/>
    </location>
</feature>
<feature type="helix" evidence="3">
    <location>
        <begin position="174"/>
        <end position="193"/>
    </location>
</feature>
<keyword id="KW-0002">3D-structure</keyword>
<keyword id="KW-0903">Direct protein sequencing</keyword>
<keyword id="KW-0406">Ion transport</keyword>
<keyword id="KW-0915">Sodium</keyword>
<keyword id="KW-0739">Sodium transport</keyword>
<keyword id="KW-0813">Transport</keyword>